<name>MDTL_ECOSE</name>
<accession>B6I3U3</accession>
<proteinExistence type="inferred from homology"/>
<reference key="1">
    <citation type="journal article" date="2008" name="DNA Res.">
        <title>Complete genome sequence and comparative analysis of the wild-type commensal Escherichia coli strain SE11 isolated from a healthy adult.</title>
        <authorList>
            <person name="Oshima K."/>
            <person name="Toh H."/>
            <person name="Ogura Y."/>
            <person name="Sasamoto H."/>
            <person name="Morita H."/>
            <person name="Park S.-H."/>
            <person name="Ooka T."/>
            <person name="Iyoda S."/>
            <person name="Taylor T.D."/>
            <person name="Hayashi T."/>
            <person name="Itoh K."/>
            <person name="Hattori M."/>
        </authorList>
    </citation>
    <scope>NUCLEOTIDE SEQUENCE [LARGE SCALE GENOMIC DNA]</scope>
    <source>
        <strain>SE11</strain>
    </source>
</reference>
<keyword id="KW-0046">Antibiotic resistance</keyword>
<keyword id="KW-0997">Cell inner membrane</keyword>
<keyword id="KW-1003">Cell membrane</keyword>
<keyword id="KW-0472">Membrane</keyword>
<keyword id="KW-0812">Transmembrane</keyword>
<keyword id="KW-1133">Transmembrane helix</keyword>
<keyword id="KW-0813">Transport</keyword>
<comment type="function">
    <text evidence="1">Confers resistance to chloramphenicol.</text>
</comment>
<comment type="subcellular location">
    <subcellularLocation>
        <location evidence="1">Cell inner membrane</location>
        <topology evidence="1">Multi-pass membrane protein</topology>
    </subcellularLocation>
</comment>
<comment type="similarity">
    <text evidence="1">Belongs to the major facilitator superfamily. DHA1 family. MdtL (TC 2.A.1.2.22) subfamily.</text>
</comment>
<feature type="chain" id="PRO_1000200817" description="Multidrug resistance protein MdtL">
    <location>
        <begin position="1"/>
        <end position="391"/>
    </location>
</feature>
<feature type="transmembrane region" description="Helical" evidence="1">
    <location>
        <begin position="4"/>
        <end position="24"/>
    </location>
</feature>
<feature type="transmembrane region" description="Helical" evidence="1">
    <location>
        <begin position="42"/>
        <end position="62"/>
    </location>
</feature>
<feature type="transmembrane region" description="Helical" evidence="1">
    <location>
        <begin position="69"/>
        <end position="89"/>
    </location>
</feature>
<feature type="transmembrane region" description="Helical" evidence="1">
    <location>
        <begin position="93"/>
        <end position="113"/>
    </location>
</feature>
<feature type="transmembrane region" description="Helical" evidence="1">
    <location>
        <begin position="131"/>
        <end position="151"/>
    </location>
</feature>
<feature type="transmembrane region" description="Helical" evidence="1">
    <location>
        <begin position="158"/>
        <end position="178"/>
    </location>
</feature>
<feature type="transmembrane region" description="Helical" evidence="1">
    <location>
        <begin position="203"/>
        <end position="222"/>
    </location>
</feature>
<feature type="transmembrane region" description="Helical" evidence="1">
    <location>
        <begin position="245"/>
        <end position="265"/>
    </location>
</feature>
<feature type="transmembrane region" description="Helical" evidence="1">
    <location>
        <begin position="269"/>
        <end position="289"/>
    </location>
</feature>
<feature type="transmembrane region" description="Helical" evidence="1">
    <location>
        <begin position="293"/>
        <end position="313"/>
    </location>
</feature>
<feature type="transmembrane region" description="Helical" evidence="1">
    <location>
        <begin position="331"/>
        <end position="351"/>
    </location>
</feature>
<feature type="transmembrane region" description="Helical" evidence="1">
    <location>
        <begin position="356"/>
        <end position="376"/>
    </location>
</feature>
<dbReference type="EMBL" id="AP009240">
    <property type="protein sequence ID" value="BAG79520.1"/>
    <property type="molecule type" value="Genomic_DNA"/>
</dbReference>
<dbReference type="RefSeq" id="WP_000085982.1">
    <property type="nucleotide sequence ID" value="NC_011415.1"/>
</dbReference>
<dbReference type="SMR" id="B6I3U3"/>
<dbReference type="KEGG" id="ecy:ECSE_3996"/>
<dbReference type="HOGENOM" id="CLU_001265_47_1_6"/>
<dbReference type="Proteomes" id="UP000008199">
    <property type="component" value="Chromosome"/>
</dbReference>
<dbReference type="GO" id="GO:0005886">
    <property type="term" value="C:plasma membrane"/>
    <property type="evidence" value="ECO:0007669"/>
    <property type="project" value="UniProtKB-SubCell"/>
</dbReference>
<dbReference type="GO" id="GO:0022857">
    <property type="term" value="F:transmembrane transporter activity"/>
    <property type="evidence" value="ECO:0007669"/>
    <property type="project" value="UniProtKB-UniRule"/>
</dbReference>
<dbReference type="GO" id="GO:0046677">
    <property type="term" value="P:response to antibiotic"/>
    <property type="evidence" value="ECO:0007669"/>
    <property type="project" value="UniProtKB-KW"/>
</dbReference>
<dbReference type="CDD" id="cd17320">
    <property type="entry name" value="MFS_MdfA_MDR_like"/>
    <property type="match status" value="1"/>
</dbReference>
<dbReference type="FunFam" id="1.20.1720.10:FF:000003">
    <property type="entry name" value="Multidrug resistance protein MdtL"/>
    <property type="match status" value="1"/>
</dbReference>
<dbReference type="Gene3D" id="1.20.1720.10">
    <property type="entry name" value="Multidrug resistance protein D"/>
    <property type="match status" value="1"/>
</dbReference>
<dbReference type="HAMAP" id="MF_01530">
    <property type="entry name" value="MFS_MdtL"/>
    <property type="match status" value="1"/>
</dbReference>
<dbReference type="InterPro" id="IPR011701">
    <property type="entry name" value="MFS"/>
</dbReference>
<dbReference type="InterPro" id="IPR020846">
    <property type="entry name" value="MFS_dom"/>
</dbReference>
<dbReference type="InterPro" id="IPR050189">
    <property type="entry name" value="MFS_Efflux_Transporters"/>
</dbReference>
<dbReference type="InterPro" id="IPR036259">
    <property type="entry name" value="MFS_trans_sf"/>
</dbReference>
<dbReference type="InterPro" id="IPR023697">
    <property type="entry name" value="Multidrug-R_MdtL"/>
</dbReference>
<dbReference type="NCBIfam" id="NF007782">
    <property type="entry name" value="PRK10473.1"/>
    <property type="match status" value="1"/>
</dbReference>
<dbReference type="PANTHER" id="PTHR43124:SF3">
    <property type="entry name" value="CHLORAMPHENICOL EFFLUX PUMP RV0191"/>
    <property type="match status" value="1"/>
</dbReference>
<dbReference type="PANTHER" id="PTHR43124">
    <property type="entry name" value="PURINE EFFLUX PUMP PBUE"/>
    <property type="match status" value="1"/>
</dbReference>
<dbReference type="Pfam" id="PF07690">
    <property type="entry name" value="MFS_1"/>
    <property type="match status" value="1"/>
</dbReference>
<dbReference type="SUPFAM" id="SSF103473">
    <property type="entry name" value="MFS general substrate transporter"/>
    <property type="match status" value="1"/>
</dbReference>
<dbReference type="PROSITE" id="PS50850">
    <property type="entry name" value="MFS"/>
    <property type="match status" value="1"/>
</dbReference>
<evidence type="ECO:0000255" key="1">
    <source>
        <dbReference type="HAMAP-Rule" id="MF_01530"/>
    </source>
</evidence>
<organism>
    <name type="scientific">Escherichia coli (strain SE11)</name>
    <dbReference type="NCBI Taxonomy" id="409438"/>
    <lineage>
        <taxon>Bacteria</taxon>
        <taxon>Pseudomonadati</taxon>
        <taxon>Pseudomonadota</taxon>
        <taxon>Gammaproteobacteria</taxon>
        <taxon>Enterobacterales</taxon>
        <taxon>Enterobacteriaceae</taxon>
        <taxon>Escherichia</taxon>
    </lineage>
</organism>
<protein>
    <recommendedName>
        <fullName evidence="1">Multidrug resistance protein MdtL</fullName>
    </recommendedName>
</protein>
<gene>
    <name evidence="1" type="primary">mdtL</name>
    <name type="ordered locus">ECSE_3996</name>
</gene>
<sequence length="391" mass="41490">MSRFLICSFALVLLYPAGIDMYLVGLPRIAADLNASEAQLHIAFSVYLAGMAAAMLFAGKVADRSGRKPVAIPGAALFIIASVFCSLAETSTLFLAGRFLQGLGAGCCYVVAFAILRDTLDDRRRAKVLSLLNGITCIIPVLAPVLGHLIMLKFPWQSLFWAMAMMGIAVLMLSLFILKETRPAAPAASDKPRENSESLLNRFFLSRVVITTLSVSVILTFVNTSPVLLMEIMGFERGEYATIMALTAGVSMTVSFSTPFALGIFKPRTLMITSQVLFLAAGITLAVSPSHAVSLFGITLICAGFSVGFGVAMSQALGPFSLRAGVASSTLGIAQVCGSSLWIWLAAVVGIGAWNMLIGILIACSIVSLLLIMFVAPGRPVAAHEEIHHHA</sequence>